<keyword id="KW-0963">Cytoplasm</keyword>
<keyword id="KW-0227">DNA damage</keyword>
<keyword id="KW-0233">DNA recombination</keyword>
<keyword id="KW-0234">DNA repair</keyword>
<keyword id="KW-0238">DNA-binding</keyword>
<organism>
    <name type="scientific">Salmonella heidelberg (strain SL476)</name>
    <dbReference type="NCBI Taxonomy" id="454169"/>
    <lineage>
        <taxon>Bacteria</taxon>
        <taxon>Pseudomonadati</taxon>
        <taxon>Pseudomonadota</taxon>
        <taxon>Gammaproteobacteria</taxon>
        <taxon>Enterobacterales</taxon>
        <taxon>Enterobacteriaceae</taxon>
        <taxon>Salmonella</taxon>
    </lineage>
</organism>
<comment type="function">
    <text evidence="1">The RuvA-RuvB-RuvC complex processes Holliday junction (HJ) DNA during genetic recombination and DNA repair, while the RuvA-RuvB complex plays an important role in the rescue of blocked DNA replication forks via replication fork reversal (RFR). RuvA specifically binds to HJ cruciform DNA, conferring on it an open structure. The RuvB hexamer acts as an ATP-dependent pump, pulling dsDNA into and through the RuvAB complex. HJ branch migration allows RuvC to scan DNA until it finds its consensus sequence, where it cleaves and resolves the cruciform DNA.</text>
</comment>
<comment type="subunit">
    <text evidence="1">Homotetramer. Forms an RuvA(8)-RuvB(12)-Holliday junction (HJ) complex. HJ DNA is sandwiched between 2 RuvA tetramers; dsDNA enters through RuvA and exits via RuvB. An RuvB hexamer assembles on each DNA strand where it exits the tetramer. Each RuvB hexamer is contacted by two RuvA subunits (via domain III) on 2 adjacent RuvB subunits; this complex drives branch migration. In the full resolvosome a probable DNA-RuvA(4)-RuvB(12)-RuvC(2) complex forms which resolves the HJ.</text>
</comment>
<comment type="subcellular location">
    <subcellularLocation>
        <location evidence="1">Cytoplasm</location>
    </subcellularLocation>
</comment>
<comment type="domain">
    <text evidence="1">Has three domains with a flexible linker between the domains II and III and assumes an 'L' shape. Domain III is highly mobile and contacts RuvB.</text>
</comment>
<comment type="similarity">
    <text evidence="1">Belongs to the RuvA family.</text>
</comment>
<proteinExistence type="inferred from homology"/>
<sequence>MIGRLRGIILEKQPPIVLLETGGVGYEVHMPMTCFYELPEAGQEAIVFTHFVVREDAQLLYGFNNKQERTLFKELIKTNGVGPKLALAILSGMSAQQFVNAVEREELGALVKLPGIGKKTAERLIVEMKDRFKGLHGDLFTPAVDLVLTSPASPTSEDAEQEAVAALVALGYKPQEASRMVSKIARPDASSETLIRDALRAAL</sequence>
<protein>
    <recommendedName>
        <fullName evidence="1">Holliday junction branch migration complex subunit RuvA</fullName>
    </recommendedName>
</protein>
<accession>B4T7Z3</accession>
<dbReference type="EMBL" id="CP001120">
    <property type="protein sequence ID" value="ACF70321.1"/>
    <property type="molecule type" value="Genomic_DNA"/>
</dbReference>
<dbReference type="RefSeq" id="WP_000580335.1">
    <property type="nucleotide sequence ID" value="NC_011083.1"/>
</dbReference>
<dbReference type="SMR" id="B4T7Z3"/>
<dbReference type="KEGG" id="seh:SeHA_C2109"/>
<dbReference type="HOGENOM" id="CLU_087936_0_0_6"/>
<dbReference type="Proteomes" id="UP000001866">
    <property type="component" value="Chromosome"/>
</dbReference>
<dbReference type="GO" id="GO:0005737">
    <property type="term" value="C:cytoplasm"/>
    <property type="evidence" value="ECO:0007669"/>
    <property type="project" value="UniProtKB-SubCell"/>
</dbReference>
<dbReference type="GO" id="GO:0009379">
    <property type="term" value="C:Holliday junction helicase complex"/>
    <property type="evidence" value="ECO:0007669"/>
    <property type="project" value="InterPro"/>
</dbReference>
<dbReference type="GO" id="GO:0048476">
    <property type="term" value="C:Holliday junction resolvase complex"/>
    <property type="evidence" value="ECO:0007669"/>
    <property type="project" value="UniProtKB-UniRule"/>
</dbReference>
<dbReference type="GO" id="GO:0005524">
    <property type="term" value="F:ATP binding"/>
    <property type="evidence" value="ECO:0007669"/>
    <property type="project" value="InterPro"/>
</dbReference>
<dbReference type="GO" id="GO:0000400">
    <property type="term" value="F:four-way junction DNA binding"/>
    <property type="evidence" value="ECO:0007669"/>
    <property type="project" value="UniProtKB-UniRule"/>
</dbReference>
<dbReference type="GO" id="GO:0009378">
    <property type="term" value="F:four-way junction helicase activity"/>
    <property type="evidence" value="ECO:0007669"/>
    <property type="project" value="InterPro"/>
</dbReference>
<dbReference type="GO" id="GO:0006310">
    <property type="term" value="P:DNA recombination"/>
    <property type="evidence" value="ECO:0007669"/>
    <property type="project" value="UniProtKB-UniRule"/>
</dbReference>
<dbReference type="GO" id="GO:0006281">
    <property type="term" value="P:DNA repair"/>
    <property type="evidence" value="ECO:0007669"/>
    <property type="project" value="UniProtKB-UniRule"/>
</dbReference>
<dbReference type="CDD" id="cd14332">
    <property type="entry name" value="UBA_RuvA_C"/>
    <property type="match status" value="1"/>
</dbReference>
<dbReference type="FunFam" id="1.10.150.20:FF:000012">
    <property type="entry name" value="Holliday junction ATP-dependent DNA helicase RuvA"/>
    <property type="match status" value="1"/>
</dbReference>
<dbReference type="FunFam" id="1.10.8.10:FF:000008">
    <property type="entry name" value="Holliday junction ATP-dependent DNA helicase RuvA"/>
    <property type="match status" value="1"/>
</dbReference>
<dbReference type="FunFam" id="2.40.50.140:FF:000083">
    <property type="entry name" value="Holliday junction ATP-dependent DNA helicase RuvA"/>
    <property type="match status" value="1"/>
</dbReference>
<dbReference type="Gene3D" id="1.10.150.20">
    <property type="entry name" value="5' to 3' exonuclease, C-terminal subdomain"/>
    <property type="match status" value="1"/>
</dbReference>
<dbReference type="Gene3D" id="1.10.8.10">
    <property type="entry name" value="DNA helicase RuvA subunit, C-terminal domain"/>
    <property type="match status" value="1"/>
</dbReference>
<dbReference type="Gene3D" id="2.40.50.140">
    <property type="entry name" value="Nucleic acid-binding proteins"/>
    <property type="match status" value="1"/>
</dbReference>
<dbReference type="HAMAP" id="MF_00031">
    <property type="entry name" value="DNA_HJ_migration_RuvA"/>
    <property type="match status" value="1"/>
</dbReference>
<dbReference type="InterPro" id="IPR013849">
    <property type="entry name" value="DNA_helicase_Holl-junc_RuvA_I"/>
</dbReference>
<dbReference type="InterPro" id="IPR003583">
    <property type="entry name" value="Hlx-hairpin-Hlx_DNA-bd_motif"/>
</dbReference>
<dbReference type="InterPro" id="IPR012340">
    <property type="entry name" value="NA-bd_OB-fold"/>
</dbReference>
<dbReference type="InterPro" id="IPR000085">
    <property type="entry name" value="RuvA"/>
</dbReference>
<dbReference type="InterPro" id="IPR010994">
    <property type="entry name" value="RuvA_2-like"/>
</dbReference>
<dbReference type="InterPro" id="IPR011114">
    <property type="entry name" value="RuvA_C"/>
</dbReference>
<dbReference type="InterPro" id="IPR036267">
    <property type="entry name" value="RuvA_C_sf"/>
</dbReference>
<dbReference type="NCBIfam" id="TIGR00084">
    <property type="entry name" value="ruvA"/>
    <property type="match status" value="1"/>
</dbReference>
<dbReference type="Pfam" id="PF14520">
    <property type="entry name" value="HHH_5"/>
    <property type="match status" value="1"/>
</dbReference>
<dbReference type="Pfam" id="PF07499">
    <property type="entry name" value="RuvA_C"/>
    <property type="match status" value="1"/>
</dbReference>
<dbReference type="Pfam" id="PF01330">
    <property type="entry name" value="RuvA_N"/>
    <property type="match status" value="1"/>
</dbReference>
<dbReference type="SMART" id="SM00278">
    <property type="entry name" value="HhH1"/>
    <property type="match status" value="2"/>
</dbReference>
<dbReference type="SUPFAM" id="SSF46929">
    <property type="entry name" value="DNA helicase RuvA subunit, C-terminal domain"/>
    <property type="match status" value="1"/>
</dbReference>
<dbReference type="SUPFAM" id="SSF50249">
    <property type="entry name" value="Nucleic acid-binding proteins"/>
    <property type="match status" value="1"/>
</dbReference>
<dbReference type="SUPFAM" id="SSF47781">
    <property type="entry name" value="RuvA domain 2-like"/>
    <property type="match status" value="1"/>
</dbReference>
<reference key="1">
    <citation type="journal article" date="2011" name="J. Bacteriol.">
        <title>Comparative genomics of 28 Salmonella enterica isolates: evidence for CRISPR-mediated adaptive sublineage evolution.</title>
        <authorList>
            <person name="Fricke W.F."/>
            <person name="Mammel M.K."/>
            <person name="McDermott P.F."/>
            <person name="Tartera C."/>
            <person name="White D.G."/>
            <person name="Leclerc J.E."/>
            <person name="Ravel J."/>
            <person name="Cebula T.A."/>
        </authorList>
    </citation>
    <scope>NUCLEOTIDE SEQUENCE [LARGE SCALE GENOMIC DNA]</scope>
    <source>
        <strain>SL476</strain>
    </source>
</reference>
<name>RUVA_SALHS</name>
<gene>
    <name evidence="1" type="primary">ruvA</name>
    <name type="ordered locus">SeHA_C2109</name>
</gene>
<evidence type="ECO:0000255" key="1">
    <source>
        <dbReference type="HAMAP-Rule" id="MF_00031"/>
    </source>
</evidence>
<feature type="chain" id="PRO_1000090365" description="Holliday junction branch migration complex subunit RuvA">
    <location>
        <begin position="1"/>
        <end position="203"/>
    </location>
</feature>
<feature type="region of interest" description="Domain I" evidence="1">
    <location>
        <begin position="1"/>
        <end position="64"/>
    </location>
</feature>
<feature type="region of interest" description="Domain II" evidence="1">
    <location>
        <begin position="65"/>
        <end position="142"/>
    </location>
</feature>
<feature type="region of interest" description="Flexible linker" evidence="1">
    <location>
        <begin position="143"/>
        <end position="154"/>
    </location>
</feature>
<feature type="region of interest" description="Domain III" evidence="1">
    <location>
        <begin position="155"/>
        <end position="203"/>
    </location>
</feature>